<organism>
    <name type="scientific">Drosophila bakoue</name>
    <name type="common">Fruit fly</name>
    <dbReference type="NCBI Taxonomy" id="30018"/>
    <lineage>
        <taxon>Eukaryota</taxon>
        <taxon>Metazoa</taxon>
        <taxon>Ecdysozoa</taxon>
        <taxon>Arthropoda</taxon>
        <taxon>Hexapoda</taxon>
        <taxon>Insecta</taxon>
        <taxon>Pterygota</taxon>
        <taxon>Neoptera</taxon>
        <taxon>Endopterygota</taxon>
        <taxon>Diptera</taxon>
        <taxon>Brachycera</taxon>
        <taxon>Muscomorpha</taxon>
        <taxon>Ephydroidea</taxon>
        <taxon>Drosophilidae</taxon>
        <taxon>Drosophila</taxon>
        <taxon>Sophophora</taxon>
    </lineage>
</organism>
<gene>
    <name type="primary">Amyrel</name>
</gene>
<sequence>MIKFALALTLCLAGASLSLAQHNPRWWGNRNTIVHLFEWKWSDIAEECETFLAPRGFAGVQVSPVNENIISAGRPWWERYQPISYKLTTRSGNEEEFADMVRRCNDVGIRIYVDVLLNHMSGDFDGVAVGTAGTEAEPSKKSFPGVPYTAQDFHPSCEITDWNNRFQVQECELVGLKDLNQHSDYVRSKLIEFLDHLIELGVAGFRVDAAKHMAAVDLEYIYGSLSNLNIEHGFPHNARPFIFQEVIDHGHETVSREEYNELGAVTEFRFSEEIGKAFRGNNALKWLQSWGTDWGFLNSDQALTFVDNHDNQRDQGSVLNYKSPRQYKMATAFHLAYPYGISRVMSSFAFDDHDTPPPQDAQENIISPEFDEDGACVNGWICEHRWRQIYAMVGFKNAVRDTELSGWWDNGDNQISFCRGNKGFLAVNNNLYDLSQELNTCLPAGEYCDVISGSLVDGACTGKSVTVNEHGYGYIHIGSDDFDGVLALHVNAKV</sequence>
<keyword id="KW-0106">Calcium</keyword>
<keyword id="KW-0119">Carbohydrate metabolism</keyword>
<keyword id="KW-0868">Chloride</keyword>
<keyword id="KW-1015">Disulfide bond</keyword>
<keyword id="KW-0326">Glycosidase</keyword>
<keyword id="KW-0378">Hydrolase</keyword>
<keyword id="KW-0479">Metal-binding</keyword>
<keyword id="KW-0873">Pyrrolidone carboxylic acid</keyword>
<keyword id="KW-0964">Secreted</keyword>
<keyword id="KW-0732">Signal</keyword>
<feature type="signal peptide" evidence="1">
    <location>
        <begin position="1"/>
        <end position="20"/>
    </location>
</feature>
<feature type="chain" id="PRO_0000001371" description="Alpha-amylase-related protein">
    <location>
        <begin position="21"/>
        <end position="494"/>
    </location>
</feature>
<feature type="active site" description="Nucleophile" evidence="2">
    <location>
        <position position="208"/>
    </location>
</feature>
<feature type="active site" description="Proton donor" evidence="2">
    <location>
        <position position="245"/>
    </location>
</feature>
<feature type="binding site" evidence="3">
    <location>
        <position position="118"/>
    </location>
    <ligand>
        <name>Ca(2+)</name>
        <dbReference type="ChEBI" id="CHEBI:29108"/>
    </ligand>
</feature>
<feature type="binding site" evidence="3">
    <location>
        <position position="169"/>
    </location>
    <ligand>
        <name>Ca(2+)</name>
        <dbReference type="ChEBI" id="CHEBI:29108"/>
    </ligand>
</feature>
<feature type="binding site" evidence="3">
    <location>
        <position position="178"/>
    </location>
    <ligand>
        <name>Ca(2+)</name>
        <dbReference type="ChEBI" id="CHEBI:29108"/>
    </ligand>
</feature>
<feature type="binding site" evidence="3">
    <location>
        <position position="206"/>
    </location>
    <ligand>
        <name>chloride</name>
        <dbReference type="ChEBI" id="CHEBI:17996"/>
    </ligand>
</feature>
<feature type="binding site" evidence="3">
    <location>
        <position position="212"/>
    </location>
    <ligand>
        <name>Ca(2+)</name>
        <dbReference type="ChEBI" id="CHEBI:29108"/>
    </ligand>
</feature>
<feature type="binding site" evidence="3">
    <location>
        <position position="308"/>
    </location>
    <ligand>
        <name>chloride</name>
        <dbReference type="ChEBI" id="CHEBI:17996"/>
    </ligand>
</feature>
<feature type="binding site" evidence="3">
    <location>
        <position position="343"/>
    </location>
    <ligand>
        <name>chloride</name>
        <dbReference type="ChEBI" id="CHEBI:17996"/>
    </ligand>
</feature>
<feature type="site" description="Transition state stabilizer" evidence="2">
    <location>
        <position position="310"/>
    </location>
</feature>
<feature type="modified residue" description="Pyrrolidone carboxylic acid" evidence="1">
    <location>
        <position position="21"/>
    </location>
</feature>
<feature type="disulfide bond" evidence="3">
    <location>
        <begin position="48"/>
        <end position="104"/>
    </location>
</feature>
<feature type="disulfide bond" evidence="3">
    <location>
        <begin position="157"/>
        <end position="171"/>
    </location>
</feature>
<feature type="disulfide bond" evidence="3">
    <location>
        <begin position="376"/>
        <end position="382"/>
    </location>
</feature>
<feature type="disulfide bond" evidence="4">
    <location>
        <begin position="418"/>
        <end position="441"/>
    </location>
</feature>
<feature type="disulfide bond" evidence="3">
    <location>
        <begin position="448"/>
        <end position="460"/>
    </location>
</feature>
<comment type="catalytic activity">
    <reaction evidence="2">
        <text>Endohydrolysis of (1-&gt;4)-alpha-D-glucosidic linkages in polysaccharides containing three or more (1-&gt;4)-alpha-linked D-glucose units.</text>
        <dbReference type="EC" id="3.2.1.1"/>
    </reaction>
</comment>
<comment type="cofactor">
    <cofactor evidence="3">
        <name>Ca(2+)</name>
        <dbReference type="ChEBI" id="CHEBI:29108"/>
    </cofactor>
    <text evidence="3">Binds 1 Ca(2+) ion per subunit.</text>
</comment>
<comment type="cofactor">
    <cofactor evidence="3">
        <name>chloride</name>
        <dbReference type="ChEBI" id="CHEBI:17996"/>
    </cofactor>
    <text evidence="3">Binds 1 Cl(-) ion per subunit.</text>
</comment>
<comment type="subunit">
    <text evidence="1">Monomer.</text>
</comment>
<comment type="subcellular location">
    <subcellularLocation>
        <location evidence="5">Secreted</location>
    </subcellularLocation>
</comment>
<comment type="similarity">
    <text evidence="5">Belongs to the glycosyl hydrolase 13 family.</text>
</comment>
<proteinExistence type="inferred from homology"/>
<name>AMYR_DROBA</name>
<accession>O77019</accession>
<evidence type="ECO:0000250" key="1"/>
<evidence type="ECO:0000250" key="2">
    <source>
        <dbReference type="UniProtKB" id="P04746"/>
    </source>
</evidence>
<evidence type="ECO:0000250" key="3">
    <source>
        <dbReference type="UniProtKB" id="P56634"/>
    </source>
</evidence>
<evidence type="ECO:0000255" key="4"/>
<evidence type="ECO:0000305" key="5"/>
<reference key="1">
    <citation type="submission" date="2002-01" db="EMBL/GenBank/DDBJ databases">
        <authorList>
            <person name="Da Lage J.-L."/>
        </authorList>
    </citation>
    <scope>NUCLEOTIDE SEQUENCE [GENOMIC DNA]</scope>
</reference>
<protein>
    <recommendedName>
        <fullName>Alpha-amylase-related protein</fullName>
        <ecNumber evidence="2">3.2.1.1</ecNumber>
    </recommendedName>
</protein>
<dbReference type="EC" id="3.2.1.1" evidence="2"/>
<dbReference type="EMBL" id="U96162">
    <property type="protein sequence ID" value="AAC39112.2"/>
    <property type="molecule type" value="Genomic_DNA"/>
</dbReference>
<dbReference type="SMR" id="O77019"/>
<dbReference type="CAZy" id="GH13">
    <property type="family name" value="Glycoside Hydrolase Family 13"/>
</dbReference>
<dbReference type="GO" id="GO:0005576">
    <property type="term" value="C:extracellular region"/>
    <property type="evidence" value="ECO:0007669"/>
    <property type="project" value="UniProtKB-SubCell"/>
</dbReference>
<dbReference type="GO" id="GO:0004556">
    <property type="term" value="F:alpha-amylase activity"/>
    <property type="evidence" value="ECO:0007669"/>
    <property type="project" value="UniProtKB-EC"/>
</dbReference>
<dbReference type="GO" id="GO:0046872">
    <property type="term" value="F:metal ion binding"/>
    <property type="evidence" value="ECO:0007669"/>
    <property type="project" value="UniProtKB-KW"/>
</dbReference>
<dbReference type="GO" id="GO:0005975">
    <property type="term" value="P:carbohydrate metabolic process"/>
    <property type="evidence" value="ECO:0007669"/>
    <property type="project" value="InterPro"/>
</dbReference>
<dbReference type="CDD" id="cd11317">
    <property type="entry name" value="AmyAc_bac_euk_AmyA"/>
    <property type="match status" value="1"/>
</dbReference>
<dbReference type="FunFam" id="3.20.20.80:FF:000119">
    <property type="entry name" value="Alpha-amylase-related protein"/>
    <property type="match status" value="1"/>
</dbReference>
<dbReference type="FunFam" id="2.60.40.1180:FF:000020">
    <property type="entry name" value="Pancreatic alpha-amylase"/>
    <property type="match status" value="1"/>
</dbReference>
<dbReference type="Gene3D" id="3.20.20.80">
    <property type="entry name" value="Glycosidases"/>
    <property type="match status" value="1"/>
</dbReference>
<dbReference type="Gene3D" id="2.60.40.1180">
    <property type="entry name" value="Golgi alpha-mannosidase II"/>
    <property type="match status" value="1"/>
</dbReference>
<dbReference type="InterPro" id="IPR006048">
    <property type="entry name" value="A-amylase/branching_C"/>
</dbReference>
<dbReference type="InterPro" id="IPR031319">
    <property type="entry name" value="A-amylase_C"/>
</dbReference>
<dbReference type="InterPro" id="IPR006046">
    <property type="entry name" value="Alpha_amylase"/>
</dbReference>
<dbReference type="InterPro" id="IPR006047">
    <property type="entry name" value="Glyco_hydro_13_cat_dom"/>
</dbReference>
<dbReference type="InterPro" id="IPR013780">
    <property type="entry name" value="Glyco_hydro_b"/>
</dbReference>
<dbReference type="InterPro" id="IPR017853">
    <property type="entry name" value="Glycoside_hydrolase_SF"/>
</dbReference>
<dbReference type="PANTHER" id="PTHR43447">
    <property type="entry name" value="ALPHA-AMYLASE"/>
    <property type="match status" value="1"/>
</dbReference>
<dbReference type="Pfam" id="PF00128">
    <property type="entry name" value="Alpha-amylase"/>
    <property type="match status" value="1"/>
</dbReference>
<dbReference type="Pfam" id="PF02806">
    <property type="entry name" value="Alpha-amylase_C"/>
    <property type="match status" value="1"/>
</dbReference>
<dbReference type="PRINTS" id="PR00110">
    <property type="entry name" value="ALPHAAMYLASE"/>
</dbReference>
<dbReference type="SMART" id="SM00642">
    <property type="entry name" value="Aamy"/>
    <property type="match status" value="1"/>
</dbReference>
<dbReference type="SMART" id="SM00632">
    <property type="entry name" value="Aamy_C"/>
    <property type="match status" value="1"/>
</dbReference>
<dbReference type="SUPFAM" id="SSF51445">
    <property type="entry name" value="(Trans)glycosidases"/>
    <property type="match status" value="1"/>
</dbReference>
<dbReference type="SUPFAM" id="SSF51011">
    <property type="entry name" value="Glycosyl hydrolase domain"/>
    <property type="match status" value="1"/>
</dbReference>